<sequence>MLWTDCLTRLRQELSDNVFAMWIRPLVAEETTDSLRLYAPNPYWTRYIQEHHLELISILVEQLSEGRIRQVEILVDSRPGAILSPAEQPATTTAALSSTPVVPQRVKKEVVEPAATQSNKILNSKKRLLNPLFTFSLFVEGRSNQMAAETCRKVLTQLGASQHNPLFLYGPTGLGKTHLMQAVGNALLQAKPNARVMYMTAESFVQDFVSSLQKGKVEEFKKNCRSLDLLLVDDIHLLAGKEASLVEFFYTFNALLDESKQIILTSDRYPKELTELDPRLVSRFSWGLSVGVEPPDIETRIEILLKKAENSGVDLPRNCALFIAQQVVANVRELEGALNKVVAIARFKGSQIDLDVVRESLKDVLAIRARTISVENIQRVVSEYFRIPLKELIGPKRTRIYARPRQLAMGLARELTGDSFPEIGMAFGGRDHSTVMHACEKVQSLKQEDPIFNEDYKNLLRLLQS</sequence>
<name>DNAA_ACIAD</name>
<protein>
    <recommendedName>
        <fullName evidence="1">Chromosomal replication initiator protein DnaA</fullName>
    </recommendedName>
</protein>
<reference key="1">
    <citation type="journal article" date="2004" name="Nucleic Acids Res.">
        <title>Unique features revealed by the genome sequence of Acinetobacter sp. ADP1, a versatile and naturally transformation competent bacterium.</title>
        <authorList>
            <person name="Barbe V."/>
            <person name="Vallenet D."/>
            <person name="Fonknechten N."/>
            <person name="Kreimeyer A."/>
            <person name="Oztas S."/>
            <person name="Labarre L."/>
            <person name="Cruveiller S."/>
            <person name="Robert C."/>
            <person name="Duprat S."/>
            <person name="Wincker P."/>
            <person name="Ornston L.N."/>
            <person name="Weissenbach J."/>
            <person name="Marliere P."/>
            <person name="Cohen G.N."/>
            <person name="Medigue C."/>
        </authorList>
    </citation>
    <scope>NUCLEOTIDE SEQUENCE [LARGE SCALE GENOMIC DNA]</scope>
    <source>
        <strain>ATCC 33305 / BD413 / ADP1</strain>
    </source>
</reference>
<proteinExistence type="inferred from homology"/>
<dbReference type="EMBL" id="CR543861">
    <property type="protein sequence ID" value="CAG66986.1"/>
    <property type="molecule type" value="Genomic_DNA"/>
</dbReference>
<dbReference type="RefSeq" id="WP_004930068.1">
    <property type="nucleotide sequence ID" value="NC_005966.1"/>
</dbReference>
<dbReference type="SMR" id="Q6FG21"/>
<dbReference type="STRING" id="202950.GCA_001485005_03176"/>
<dbReference type="GeneID" id="45232533"/>
<dbReference type="KEGG" id="aci:ACIAD0001"/>
<dbReference type="eggNOG" id="COG0593">
    <property type="taxonomic scope" value="Bacteria"/>
</dbReference>
<dbReference type="HOGENOM" id="CLU_026910_0_1_6"/>
<dbReference type="OrthoDB" id="9807019at2"/>
<dbReference type="BioCyc" id="ASP62977:ACIAD_RS00005-MONOMER"/>
<dbReference type="Proteomes" id="UP000000430">
    <property type="component" value="Chromosome"/>
</dbReference>
<dbReference type="GO" id="GO:0005737">
    <property type="term" value="C:cytoplasm"/>
    <property type="evidence" value="ECO:0007669"/>
    <property type="project" value="UniProtKB-SubCell"/>
</dbReference>
<dbReference type="GO" id="GO:0005886">
    <property type="term" value="C:plasma membrane"/>
    <property type="evidence" value="ECO:0007669"/>
    <property type="project" value="TreeGrafter"/>
</dbReference>
<dbReference type="GO" id="GO:0005524">
    <property type="term" value="F:ATP binding"/>
    <property type="evidence" value="ECO:0007669"/>
    <property type="project" value="UniProtKB-UniRule"/>
</dbReference>
<dbReference type="GO" id="GO:0016887">
    <property type="term" value="F:ATP hydrolysis activity"/>
    <property type="evidence" value="ECO:0007669"/>
    <property type="project" value="InterPro"/>
</dbReference>
<dbReference type="GO" id="GO:0003688">
    <property type="term" value="F:DNA replication origin binding"/>
    <property type="evidence" value="ECO:0007669"/>
    <property type="project" value="UniProtKB-UniRule"/>
</dbReference>
<dbReference type="GO" id="GO:0008289">
    <property type="term" value="F:lipid binding"/>
    <property type="evidence" value="ECO:0007669"/>
    <property type="project" value="UniProtKB-KW"/>
</dbReference>
<dbReference type="GO" id="GO:0006270">
    <property type="term" value="P:DNA replication initiation"/>
    <property type="evidence" value="ECO:0007669"/>
    <property type="project" value="UniProtKB-UniRule"/>
</dbReference>
<dbReference type="GO" id="GO:0006275">
    <property type="term" value="P:regulation of DNA replication"/>
    <property type="evidence" value="ECO:0007669"/>
    <property type="project" value="UniProtKB-UniRule"/>
</dbReference>
<dbReference type="CDD" id="cd00009">
    <property type="entry name" value="AAA"/>
    <property type="match status" value="1"/>
</dbReference>
<dbReference type="CDD" id="cd06571">
    <property type="entry name" value="Bac_DnaA_C"/>
    <property type="match status" value="1"/>
</dbReference>
<dbReference type="FunFam" id="1.10.8.60:FF:000003">
    <property type="entry name" value="Chromosomal replication initiator protein DnaA"/>
    <property type="match status" value="1"/>
</dbReference>
<dbReference type="FunFam" id="3.40.50.300:FF:000668">
    <property type="entry name" value="Chromosomal replication initiator protein DnaA"/>
    <property type="match status" value="1"/>
</dbReference>
<dbReference type="Gene3D" id="1.10.1750.10">
    <property type="match status" value="1"/>
</dbReference>
<dbReference type="Gene3D" id="1.10.8.60">
    <property type="match status" value="1"/>
</dbReference>
<dbReference type="Gene3D" id="3.30.300.180">
    <property type="match status" value="1"/>
</dbReference>
<dbReference type="Gene3D" id="3.40.50.300">
    <property type="entry name" value="P-loop containing nucleotide triphosphate hydrolases"/>
    <property type="match status" value="1"/>
</dbReference>
<dbReference type="HAMAP" id="MF_00377">
    <property type="entry name" value="DnaA_bact"/>
    <property type="match status" value="1"/>
</dbReference>
<dbReference type="InterPro" id="IPR003593">
    <property type="entry name" value="AAA+_ATPase"/>
</dbReference>
<dbReference type="InterPro" id="IPR001957">
    <property type="entry name" value="Chromosome_initiator_DnaA"/>
</dbReference>
<dbReference type="InterPro" id="IPR020591">
    <property type="entry name" value="Chromosome_initiator_DnaA-like"/>
</dbReference>
<dbReference type="InterPro" id="IPR018312">
    <property type="entry name" value="Chromosome_initiator_DnaA_CS"/>
</dbReference>
<dbReference type="InterPro" id="IPR013159">
    <property type="entry name" value="DnaA_C"/>
</dbReference>
<dbReference type="InterPro" id="IPR013317">
    <property type="entry name" value="DnaA_dom"/>
</dbReference>
<dbReference type="InterPro" id="IPR024633">
    <property type="entry name" value="DnaA_N_dom"/>
</dbReference>
<dbReference type="InterPro" id="IPR038454">
    <property type="entry name" value="DnaA_N_sf"/>
</dbReference>
<dbReference type="InterPro" id="IPR027417">
    <property type="entry name" value="P-loop_NTPase"/>
</dbReference>
<dbReference type="InterPro" id="IPR010921">
    <property type="entry name" value="Trp_repressor/repl_initiator"/>
</dbReference>
<dbReference type="NCBIfam" id="TIGR00362">
    <property type="entry name" value="DnaA"/>
    <property type="match status" value="1"/>
</dbReference>
<dbReference type="PANTHER" id="PTHR30050">
    <property type="entry name" value="CHROMOSOMAL REPLICATION INITIATOR PROTEIN DNAA"/>
    <property type="match status" value="1"/>
</dbReference>
<dbReference type="PANTHER" id="PTHR30050:SF2">
    <property type="entry name" value="CHROMOSOMAL REPLICATION INITIATOR PROTEIN DNAA"/>
    <property type="match status" value="1"/>
</dbReference>
<dbReference type="Pfam" id="PF00308">
    <property type="entry name" value="Bac_DnaA"/>
    <property type="match status" value="1"/>
</dbReference>
<dbReference type="Pfam" id="PF08299">
    <property type="entry name" value="Bac_DnaA_C"/>
    <property type="match status" value="1"/>
</dbReference>
<dbReference type="Pfam" id="PF11638">
    <property type="entry name" value="DnaA_N"/>
    <property type="match status" value="1"/>
</dbReference>
<dbReference type="PRINTS" id="PR00051">
    <property type="entry name" value="DNAA"/>
</dbReference>
<dbReference type="SMART" id="SM00382">
    <property type="entry name" value="AAA"/>
    <property type="match status" value="1"/>
</dbReference>
<dbReference type="SMART" id="SM00760">
    <property type="entry name" value="Bac_DnaA_C"/>
    <property type="match status" value="1"/>
</dbReference>
<dbReference type="SUPFAM" id="SSF52540">
    <property type="entry name" value="P-loop containing nucleoside triphosphate hydrolases"/>
    <property type="match status" value="1"/>
</dbReference>
<dbReference type="SUPFAM" id="SSF48295">
    <property type="entry name" value="TrpR-like"/>
    <property type="match status" value="1"/>
</dbReference>
<dbReference type="PROSITE" id="PS01008">
    <property type="entry name" value="DNAA"/>
    <property type="match status" value="1"/>
</dbReference>
<accession>Q6FG21</accession>
<comment type="function">
    <text evidence="1">Plays an essential role in the initiation and regulation of chromosomal replication. ATP-DnaA binds to the origin of replication (oriC) to initiate formation of the DNA replication initiation complex once per cell cycle. Binds the DnaA box (a 9 base pair repeat at the origin) and separates the double-stranded (ds)DNA. Forms a right-handed helical filament on oriC DNA; dsDNA binds to the exterior of the filament while single-stranded (ss)DNA is stabiized in the filament's interior. The ATP-DnaA-oriC complex binds and stabilizes one strand of the AT-rich DNA unwinding element (DUE), permitting loading of DNA polymerase. After initiation quickly degrades to an ADP-DnaA complex that is not apt for DNA replication. Binds acidic phospholipids.</text>
</comment>
<comment type="subunit">
    <text evidence="1">Oligomerizes as a right-handed, spiral filament on DNA at oriC.</text>
</comment>
<comment type="subcellular location">
    <subcellularLocation>
        <location evidence="1">Cytoplasm</location>
    </subcellularLocation>
</comment>
<comment type="domain">
    <text evidence="1">Domain I is involved in oligomerization and binding regulators, domain II is flexibile and of varying length in different bacteria, domain III forms the AAA+ region, while domain IV binds dsDNA.</text>
</comment>
<comment type="similarity">
    <text evidence="1">Belongs to the DnaA family.</text>
</comment>
<organism>
    <name type="scientific">Acinetobacter baylyi (strain ATCC 33305 / BD413 / ADP1)</name>
    <dbReference type="NCBI Taxonomy" id="62977"/>
    <lineage>
        <taxon>Bacteria</taxon>
        <taxon>Pseudomonadati</taxon>
        <taxon>Pseudomonadota</taxon>
        <taxon>Gammaproteobacteria</taxon>
        <taxon>Moraxellales</taxon>
        <taxon>Moraxellaceae</taxon>
        <taxon>Acinetobacter</taxon>
    </lineage>
</organism>
<keyword id="KW-0067">ATP-binding</keyword>
<keyword id="KW-0963">Cytoplasm</keyword>
<keyword id="KW-0235">DNA replication</keyword>
<keyword id="KW-0238">DNA-binding</keyword>
<keyword id="KW-0446">Lipid-binding</keyword>
<keyword id="KW-0547">Nucleotide-binding</keyword>
<gene>
    <name evidence="1" type="primary">dnaA</name>
    <name type="ordered locus">ACIAD0001</name>
</gene>
<feature type="chain" id="PRO_0000114118" description="Chromosomal replication initiator protein DnaA">
    <location>
        <begin position="1"/>
        <end position="465"/>
    </location>
</feature>
<feature type="region of interest" description="Domain I, interacts with DnaA modulators" evidence="1">
    <location>
        <begin position="1"/>
        <end position="80"/>
    </location>
</feature>
<feature type="region of interest" description="Domain II" evidence="1">
    <location>
        <begin position="80"/>
        <end position="127"/>
    </location>
</feature>
<feature type="region of interest" description="Domain III, AAA+ region" evidence="1">
    <location>
        <begin position="128"/>
        <end position="345"/>
    </location>
</feature>
<feature type="region of interest" description="Domain IV, binds dsDNA" evidence="1">
    <location>
        <begin position="346"/>
        <end position="465"/>
    </location>
</feature>
<feature type="binding site" evidence="1">
    <location>
        <position position="173"/>
    </location>
    <ligand>
        <name>ATP</name>
        <dbReference type="ChEBI" id="CHEBI:30616"/>
    </ligand>
</feature>
<feature type="binding site" evidence="1">
    <location>
        <position position="175"/>
    </location>
    <ligand>
        <name>ATP</name>
        <dbReference type="ChEBI" id="CHEBI:30616"/>
    </ligand>
</feature>
<feature type="binding site" evidence="1">
    <location>
        <position position="176"/>
    </location>
    <ligand>
        <name>ATP</name>
        <dbReference type="ChEBI" id="CHEBI:30616"/>
    </ligand>
</feature>
<feature type="binding site" evidence="1">
    <location>
        <position position="177"/>
    </location>
    <ligand>
        <name>ATP</name>
        <dbReference type="ChEBI" id="CHEBI:30616"/>
    </ligand>
</feature>
<evidence type="ECO:0000255" key="1">
    <source>
        <dbReference type="HAMAP-Rule" id="MF_00377"/>
    </source>
</evidence>